<feature type="chain" id="PRO_0000143719" description="Maturase K">
    <location>
        <begin position="1"/>
        <end position="510"/>
    </location>
</feature>
<comment type="function">
    <text evidence="1">Usually encoded in the trnK tRNA gene intron. Probably assists in splicing its own and other chloroplast group II introns.</text>
</comment>
<comment type="subcellular location">
    <subcellularLocation>
        <location>Plastid</location>
        <location>Chloroplast</location>
    </subcellularLocation>
</comment>
<comment type="similarity">
    <text evidence="1">Belongs to the intron maturase 2 family. MatK subfamily.</text>
</comment>
<evidence type="ECO:0000255" key="1">
    <source>
        <dbReference type="HAMAP-Rule" id="MF_01390"/>
    </source>
</evidence>
<keyword id="KW-0150">Chloroplast</keyword>
<keyword id="KW-0507">mRNA processing</keyword>
<keyword id="KW-0934">Plastid</keyword>
<keyword id="KW-0694">RNA-binding</keyword>
<keyword id="KW-0819">tRNA processing</keyword>
<accession>Q8WHM7</accession>
<dbReference type="EMBL" id="AY034183">
    <property type="protein sequence ID" value="AAK61554.1"/>
    <property type="molecule type" value="Genomic_DNA"/>
</dbReference>
<dbReference type="GO" id="GO:0009507">
    <property type="term" value="C:chloroplast"/>
    <property type="evidence" value="ECO:0007669"/>
    <property type="project" value="UniProtKB-SubCell"/>
</dbReference>
<dbReference type="GO" id="GO:0003723">
    <property type="term" value="F:RNA binding"/>
    <property type="evidence" value="ECO:0007669"/>
    <property type="project" value="UniProtKB-KW"/>
</dbReference>
<dbReference type="GO" id="GO:0006397">
    <property type="term" value="P:mRNA processing"/>
    <property type="evidence" value="ECO:0007669"/>
    <property type="project" value="UniProtKB-KW"/>
</dbReference>
<dbReference type="GO" id="GO:0008380">
    <property type="term" value="P:RNA splicing"/>
    <property type="evidence" value="ECO:0007669"/>
    <property type="project" value="UniProtKB-UniRule"/>
</dbReference>
<dbReference type="GO" id="GO:0008033">
    <property type="term" value="P:tRNA processing"/>
    <property type="evidence" value="ECO:0007669"/>
    <property type="project" value="UniProtKB-KW"/>
</dbReference>
<dbReference type="HAMAP" id="MF_01390">
    <property type="entry name" value="MatK"/>
    <property type="match status" value="1"/>
</dbReference>
<dbReference type="InterPro" id="IPR024937">
    <property type="entry name" value="Domain_X"/>
</dbReference>
<dbReference type="InterPro" id="IPR002866">
    <property type="entry name" value="Maturase_MatK"/>
</dbReference>
<dbReference type="InterPro" id="IPR024942">
    <property type="entry name" value="Maturase_MatK_N"/>
</dbReference>
<dbReference type="PANTHER" id="PTHR34811">
    <property type="entry name" value="MATURASE K"/>
    <property type="match status" value="1"/>
</dbReference>
<dbReference type="PANTHER" id="PTHR34811:SF1">
    <property type="entry name" value="MATURASE K"/>
    <property type="match status" value="1"/>
</dbReference>
<dbReference type="Pfam" id="PF01348">
    <property type="entry name" value="Intron_maturas2"/>
    <property type="match status" value="1"/>
</dbReference>
<dbReference type="Pfam" id="PF01824">
    <property type="entry name" value="MatK_N"/>
    <property type="match status" value="1"/>
</dbReference>
<organism>
    <name type="scientific">Spirodela intermedia</name>
    <name type="common">Intermediate duckweed</name>
    <dbReference type="NCBI Taxonomy" id="51605"/>
    <lineage>
        <taxon>Eukaryota</taxon>
        <taxon>Viridiplantae</taxon>
        <taxon>Streptophyta</taxon>
        <taxon>Embryophyta</taxon>
        <taxon>Tracheophyta</taxon>
        <taxon>Spermatophyta</taxon>
        <taxon>Magnoliopsida</taxon>
        <taxon>Liliopsida</taxon>
        <taxon>Araceae</taxon>
        <taxon>Lemnoideae</taxon>
        <taxon>Spirodela</taxon>
    </lineage>
</organism>
<reference key="1">
    <citation type="journal article" date="2002" name="Syst. Bot.">
        <title>Phylogeny and systematics of Lemnaceae, the duckweed family.</title>
        <authorList>
            <person name="Les D.H."/>
            <person name="Crawford D.J."/>
            <person name="Landolt E."/>
            <person name="Gabel J.D."/>
            <person name="Kimball R.T."/>
        </authorList>
        <dbReference type="AGRICOLA" id="IND23289763"/>
    </citation>
    <scope>NUCLEOTIDE SEQUENCE [GENOMIC DNA]</scope>
</reference>
<sequence length="510" mass="60120">MEEFKGYLQKGGFKQQHFLYPLLFQEYIYVLAHDHGLNVNASTLNEPSEISGYDNKSSLLLVKRLITRIYQQNSLIHSVNDSNQNRFVGHNNNFYYKMISEGFAIVVEIPFSLRLISSLKEKKEIPKSQNLRSIHSIFSFLEDKFAHLNYVSDILIPYPVHLEILVQILQCWIQDVPSLHLLRFLFHEYHNGNNCITPKKSSYGFSKDNPRLYRFLYNSYVVECESIFVFLRKSSSYLQSTSFGTLLERTYFYGKIKHIGVTHSNDFQKTLWLFKDPFMHYVRYQGKSIMASKGTHLLMKKWKSYFVNLWQCHFHFWSQPSRIHINQFSHFSFYFLGYLSSVPINRSSVKSQMLENSFLIDTVTKKFETMVSIIPMIGSLSKAKFCNLSGNPISKPVWADLSDSDIIDRFGRICRNLSHYYSGSSKKQSLYRIKYILRLSCARTLARKHKSTVRAFLQRLGSEFLEEFFMEEEKVLSLMLPRTSYSLHKLYREPIWYLDIIRINDLVNHL</sequence>
<name>MATK_SPIIN</name>
<geneLocation type="chloroplast"/>
<protein>
    <recommendedName>
        <fullName evidence="1">Maturase K</fullName>
    </recommendedName>
    <alternativeName>
        <fullName evidence="1">Intron maturase</fullName>
    </alternativeName>
</protein>
<proteinExistence type="inferred from homology"/>
<gene>
    <name evidence="1" type="primary">matK</name>
</gene>